<evidence type="ECO:0000255" key="1">
    <source>
        <dbReference type="HAMAP-Rule" id="MF_01322"/>
    </source>
</evidence>
<evidence type="ECO:0000256" key="2">
    <source>
        <dbReference type="SAM" id="MobiDB-lite"/>
    </source>
</evidence>
<dbReference type="EC" id="2.7.7.6" evidence="1"/>
<dbReference type="EMBL" id="CP000941">
    <property type="protein sequence ID" value="ACA13048.1"/>
    <property type="molecule type" value="Genomic_DNA"/>
</dbReference>
<dbReference type="RefSeq" id="WP_004084688.1">
    <property type="nucleotide sequence ID" value="NC_010513.1"/>
</dbReference>
<dbReference type="SMR" id="B0U5X6"/>
<dbReference type="KEGG" id="xfm:Xfasm12_2195"/>
<dbReference type="HOGENOM" id="CLU_000524_3_1_6"/>
<dbReference type="GO" id="GO:0000428">
    <property type="term" value="C:DNA-directed RNA polymerase complex"/>
    <property type="evidence" value="ECO:0007669"/>
    <property type="project" value="UniProtKB-KW"/>
</dbReference>
<dbReference type="GO" id="GO:0003677">
    <property type="term" value="F:DNA binding"/>
    <property type="evidence" value="ECO:0007669"/>
    <property type="project" value="UniProtKB-UniRule"/>
</dbReference>
<dbReference type="GO" id="GO:0003899">
    <property type="term" value="F:DNA-directed RNA polymerase activity"/>
    <property type="evidence" value="ECO:0007669"/>
    <property type="project" value="UniProtKB-UniRule"/>
</dbReference>
<dbReference type="GO" id="GO:0000287">
    <property type="term" value="F:magnesium ion binding"/>
    <property type="evidence" value="ECO:0007669"/>
    <property type="project" value="UniProtKB-UniRule"/>
</dbReference>
<dbReference type="GO" id="GO:0008270">
    <property type="term" value="F:zinc ion binding"/>
    <property type="evidence" value="ECO:0007669"/>
    <property type="project" value="UniProtKB-UniRule"/>
</dbReference>
<dbReference type="GO" id="GO:0006351">
    <property type="term" value="P:DNA-templated transcription"/>
    <property type="evidence" value="ECO:0007669"/>
    <property type="project" value="UniProtKB-UniRule"/>
</dbReference>
<dbReference type="CDD" id="cd02655">
    <property type="entry name" value="RNAP_beta'_C"/>
    <property type="match status" value="1"/>
</dbReference>
<dbReference type="CDD" id="cd01609">
    <property type="entry name" value="RNAP_beta'_N"/>
    <property type="match status" value="1"/>
</dbReference>
<dbReference type="FunFam" id="1.10.132.30:FF:000003">
    <property type="entry name" value="DNA-directed RNA polymerase subunit beta"/>
    <property type="match status" value="1"/>
</dbReference>
<dbReference type="FunFam" id="1.10.150.390:FF:000002">
    <property type="entry name" value="DNA-directed RNA polymerase subunit beta"/>
    <property type="match status" value="1"/>
</dbReference>
<dbReference type="Gene3D" id="1.10.132.30">
    <property type="match status" value="1"/>
</dbReference>
<dbReference type="Gene3D" id="1.10.150.390">
    <property type="match status" value="1"/>
</dbReference>
<dbReference type="Gene3D" id="1.10.1790.20">
    <property type="match status" value="1"/>
</dbReference>
<dbReference type="Gene3D" id="1.10.40.90">
    <property type="match status" value="1"/>
</dbReference>
<dbReference type="Gene3D" id="2.40.40.20">
    <property type="match status" value="1"/>
</dbReference>
<dbReference type="Gene3D" id="2.40.50.100">
    <property type="match status" value="3"/>
</dbReference>
<dbReference type="Gene3D" id="4.10.860.120">
    <property type="entry name" value="RNA polymerase II, clamp domain"/>
    <property type="match status" value="1"/>
</dbReference>
<dbReference type="Gene3D" id="1.10.274.100">
    <property type="entry name" value="RNA polymerase Rpb1, domain 3"/>
    <property type="match status" value="1"/>
</dbReference>
<dbReference type="HAMAP" id="MF_01322">
    <property type="entry name" value="RNApol_bact_RpoC"/>
    <property type="match status" value="1"/>
</dbReference>
<dbReference type="InterPro" id="IPR045867">
    <property type="entry name" value="DNA-dir_RpoC_beta_prime"/>
</dbReference>
<dbReference type="InterPro" id="IPR012754">
    <property type="entry name" value="DNA-dir_RpoC_beta_prime_bact"/>
</dbReference>
<dbReference type="InterPro" id="IPR000722">
    <property type="entry name" value="RNA_pol_asu"/>
</dbReference>
<dbReference type="InterPro" id="IPR006592">
    <property type="entry name" value="RNA_pol_N"/>
</dbReference>
<dbReference type="InterPro" id="IPR007080">
    <property type="entry name" value="RNA_pol_Rpb1_1"/>
</dbReference>
<dbReference type="InterPro" id="IPR007066">
    <property type="entry name" value="RNA_pol_Rpb1_3"/>
</dbReference>
<dbReference type="InterPro" id="IPR042102">
    <property type="entry name" value="RNA_pol_Rpb1_3_sf"/>
</dbReference>
<dbReference type="InterPro" id="IPR007083">
    <property type="entry name" value="RNA_pol_Rpb1_4"/>
</dbReference>
<dbReference type="InterPro" id="IPR007081">
    <property type="entry name" value="RNA_pol_Rpb1_5"/>
</dbReference>
<dbReference type="InterPro" id="IPR044893">
    <property type="entry name" value="RNA_pol_Rpb1_clamp_domain"/>
</dbReference>
<dbReference type="InterPro" id="IPR038120">
    <property type="entry name" value="Rpb1_funnel_sf"/>
</dbReference>
<dbReference type="NCBIfam" id="TIGR02386">
    <property type="entry name" value="rpoC_TIGR"/>
    <property type="match status" value="1"/>
</dbReference>
<dbReference type="PANTHER" id="PTHR19376">
    <property type="entry name" value="DNA-DIRECTED RNA POLYMERASE"/>
    <property type="match status" value="1"/>
</dbReference>
<dbReference type="PANTHER" id="PTHR19376:SF54">
    <property type="entry name" value="DNA-DIRECTED RNA POLYMERASE SUBUNIT BETA"/>
    <property type="match status" value="1"/>
</dbReference>
<dbReference type="Pfam" id="PF04997">
    <property type="entry name" value="RNA_pol_Rpb1_1"/>
    <property type="match status" value="1"/>
</dbReference>
<dbReference type="Pfam" id="PF00623">
    <property type="entry name" value="RNA_pol_Rpb1_2"/>
    <property type="match status" value="1"/>
</dbReference>
<dbReference type="Pfam" id="PF04983">
    <property type="entry name" value="RNA_pol_Rpb1_3"/>
    <property type="match status" value="1"/>
</dbReference>
<dbReference type="Pfam" id="PF05000">
    <property type="entry name" value="RNA_pol_Rpb1_4"/>
    <property type="match status" value="1"/>
</dbReference>
<dbReference type="Pfam" id="PF04998">
    <property type="entry name" value="RNA_pol_Rpb1_5"/>
    <property type="match status" value="1"/>
</dbReference>
<dbReference type="SMART" id="SM00663">
    <property type="entry name" value="RPOLA_N"/>
    <property type="match status" value="1"/>
</dbReference>
<dbReference type="SUPFAM" id="SSF64484">
    <property type="entry name" value="beta and beta-prime subunits of DNA dependent RNA-polymerase"/>
    <property type="match status" value="1"/>
</dbReference>
<keyword id="KW-0240">DNA-directed RNA polymerase</keyword>
<keyword id="KW-0460">Magnesium</keyword>
<keyword id="KW-0479">Metal-binding</keyword>
<keyword id="KW-0548">Nucleotidyltransferase</keyword>
<keyword id="KW-0804">Transcription</keyword>
<keyword id="KW-0808">Transferase</keyword>
<keyword id="KW-0862">Zinc</keyword>
<protein>
    <recommendedName>
        <fullName evidence="1">DNA-directed RNA polymerase subunit beta'</fullName>
        <shortName evidence="1">RNAP subunit beta'</shortName>
        <ecNumber evidence="1">2.7.7.6</ecNumber>
    </recommendedName>
    <alternativeName>
        <fullName evidence="1">RNA polymerase subunit beta'</fullName>
    </alternativeName>
    <alternativeName>
        <fullName evidence="1">Transcriptase subunit beta'</fullName>
    </alternativeName>
</protein>
<sequence length="1411" mass="156391">MKDLLNLFNQQRQTLDFDAIKIGLASPALIRSWSFGEVKKPETINYRTFKPERDGLFCAAIFGPIKDYECLCGKYKRMKHRGVVCEKCGTEVTLAKVRRERMGCIELASPVAHIWFLKSLPSRIGLMLDMTLRDIERVLYFEAYVVTEPGLTPLERRQLLTEEQYLQARQEHADDFDASMGAEAVYELLRMIDLQSEMARLREEIVVTGSETKLKRLTKRIKLIEAFIESGNRPEWMILTVLPVLPPDLRPLVPLDGGRFATSDLNDLYRRVINRNNRLCRLLELSAPDIIVRNEKRMLQESVDALLDNGRRGRAITGTNKRPLKSLADMIKGKQGRFRQNLLGKRVDYSARSVIIVGPNLRLHQCGLPKKMALELFKPFVFAKLQRRGLATTIKGAKKLVEREEAEVWDILEEVIFEHPVVLNRAPTLHRQGIQAFEPVLIEGKAIQLHPLVCTAFNADFDGDQMAVHVPLSLEAQLEARALMMSTNNILSPANGEPIIVPSQDVVLGLYYMSRALENKKGEGMVFANTSELKRAYDNSVVELHAKVKVRITEIETDDQGLRNKASSIVDTTVGRALLSEILPEGLPFVLVNTEMTKKNISRLINSSYRMLGLKETVVFADKLMYTGYAYATRAGVSICIDDMLIPLEKKEILGEAEQEVLEIQEQYQSGLVTAGERYNKVVDIWSRTNERIAKAMMDTIGTEKVVNTDGEIVDQKSMNSLYIMADSGARGSPQQIRQLAAMRGLMVRPDGSIIETPIKANFREGLSVQEYFNSTHGARKGLADTALKTANSGYLTRRLVDVTQDLCVVQLDCGTAGGLTMTPIVEGGDVVEPLKDRVLGRVVAEDVLLPGNDDEPIVTRSTLLDEQWVAKLEEAGVQSVKVRSPITCESPFGVCALCYGRDLARGHLVNMGEAVGVIAAQSIGEPGTQLTMRTFHIGGTALSAAAIDNIAVKTSGSVKFTNLKYVEHANGTLVAVSRSGEISVLDTHGRERERYKLPYGATINVKDMAEVKSGQILANWDPHNHPIVSEVAGFVRFIDFVDGVTVIEKTDDLTGLSSREIADLKRRGSQGKDLRPLVRIVDKKGNDLTIPGTDLSAQYLLPPRSIVNLQDGAPVGIGDVVAKIPQEASKTRDITGGLPRVADLFEARRPKDPAILAERSGVISFGKDTKGKQRLIIKDADGSEHEELIPKYRQIIVFEGEHVTKGETIVDGEPSPQDILRLLGIEPLAAYLVKEIQDVYRLQGVKINDKHIEVITRQMLRKVEIVDQGNSKFLNGEQVERQRVIDENAKLIARNELPAKYNPVLLGITKASLATESFISAASFQETTRVLTEAAVRGTRDNLRGLKENVIVGRLIPAGTGQTYHSQRRYSSVGLTESEMETLVGRSTSSGTEITSPSKDAIPLGSKVGF</sequence>
<comment type="function">
    <text evidence="1">DNA-dependent RNA polymerase catalyzes the transcription of DNA into RNA using the four ribonucleoside triphosphates as substrates.</text>
</comment>
<comment type="catalytic activity">
    <reaction evidence="1">
        <text>RNA(n) + a ribonucleoside 5'-triphosphate = RNA(n+1) + diphosphate</text>
        <dbReference type="Rhea" id="RHEA:21248"/>
        <dbReference type="Rhea" id="RHEA-COMP:14527"/>
        <dbReference type="Rhea" id="RHEA-COMP:17342"/>
        <dbReference type="ChEBI" id="CHEBI:33019"/>
        <dbReference type="ChEBI" id="CHEBI:61557"/>
        <dbReference type="ChEBI" id="CHEBI:140395"/>
        <dbReference type="EC" id="2.7.7.6"/>
    </reaction>
</comment>
<comment type="cofactor">
    <cofactor evidence="1">
        <name>Mg(2+)</name>
        <dbReference type="ChEBI" id="CHEBI:18420"/>
    </cofactor>
    <text evidence="1">Binds 1 Mg(2+) ion per subunit.</text>
</comment>
<comment type="cofactor">
    <cofactor evidence="1">
        <name>Zn(2+)</name>
        <dbReference type="ChEBI" id="CHEBI:29105"/>
    </cofactor>
    <text evidence="1">Binds 2 Zn(2+) ions per subunit.</text>
</comment>
<comment type="subunit">
    <text evidence="1">The RNAP catalytic core consists of 2 alpha, 1 beta, 1 beta' and 1 omega subunit. When a sigma factor is associated with the core the holoenzyme is formed, which can initiate transcription.</text>
</comment>
<comment type="similarity">
    <text evidence="1">Belongs to the RNA polymerase beta' chain family.</text>
</comment>
<feature type="chain" id="PRO_1000141802" description="DNA-directed RNA polymerase subunit beta'">
    <location>
        <begin position="1"/>
        <end position="1411"/>
    </location>
</feature>
<feature type="region of interest" description="Disordered" evidence="2">
    <location>
        <begin position="1387"/>
        <end position="1411"/>
    </location>
</feature>
<feature type="compositionally biased region" description="Polar residues" evidence="2">
    <location>
        <begin position="1387"/>
        <end position="1399"/>
    </location>
</feature>
<feature type="binding site" evidence="1">
    <location>
        <position position="70"/>
    </location>
    <ligand>
        <name>Zn(2+)</name>
        <dbReference type="ChEBI" id="CHEBI:29105"/>
        <label>1</label>
    </ligand>
</feature>
<feature type="binding site" evidence="1">
    <location>
        <position position="72"/>
    </location>
    <ligand>
        <name>Zn(2+)</name>
        <dbReference type="ChEBI" id="CHEBI:29105"/>
        <label>1</label>
    </ligand>
</feature>
<feature type="binding site" evidence="1">
    <location>
        <position position="85"/>
    </location>
    <ligand>
        <name>Zn(2+)</name>
        <dbReference type="ChEBI" id="CHEBI:29105"/>
        <label>1</label>
    </ligand>
</feature>
<feature type="binding site" evidence="1">
    <location>
        <position position="88"/>
    </location>
    <ligand>
        <name>Zn(2+)</name>
        <dbReference type="ChEBI" id="CHEBI:29105"/>
        <label>1</label>
    </ligand>
</feature>
<feature type="binding site" evidence="1">
    <location>
        <position position="460"/>
    </location>
    <ligand>
        <name>Mg(2+)</name>
        <dbReference type="ChEBI" id="CHEBI:18420"/>
    </ligand>
</feature>
<feature type="binding site" evidence="1">
    <location>
        <position position="462"/>
    </location>
    <ligand>
        <name>Mg(2+)</name>
        <dbReference type="ChEBI" id="CHEBI:18420"/>
    </ligand>
</feature>
<feature type="binding site" evidence="1">
    <location>
        <position position="464"/>
    </location>
    <ligand>
        <name>Mg(2+)</name>
        <dbReference type="ChEBI" id="CHEBI:18420"/>
    </ligand>
</feature>
<feature type="binding site" evidence="1">
    <location>
        <position position="814"/>
    </location>
    <ligand>
        <name>Zn(2+)</name>
        <dbReference type="ChEBI" id="CHEBI:29105"/>
        <label>2</label>
    </ligand>
</feature>
<feature type="binding site" evidence="1">
    <location>
        <position position="889"/>
    </location>
    <ligand>
        <name>Zn(2+)</name>
        <dbReference type="ChEBI" id="CHEBI:29105"/>
        <label>2</label>
    </ligand>
</feature>
<feature type="binding site" evidence="1">
    <location>
        <position position="896"/>
    </location>
    <ligand>
        <name>Zn(2+)</name>
        <dbReference type="ChEBI" id="CHEBI:29105"/>
        <label>2</label>
    </ligand>
</feature>
<feature type="binding site" evidence="1">
    <location>
        <position position="899"/>
    </location>
    <ligand>
        <name>Zn(2+)</name>
        <dbReference type="ChEBI" id="CHEBI:29105"/>
        <label>2</label>
    </ligand>
</feature>
<gene>
    <name evidence="1" type="primary">rpoC</name>
    <name type="ordered locus">Xfasm12_2195</name>
</gene>
<name>RPOC_XYLFM</name>
<accession>B0U5X6</accession>
<proteinExistence type="inferred from homology"/>
<organism>
    <name type="scientific">Xylella fastidiosa (strain M12)</name>
    <dbReference type="NCBI Taxonomy" id="405440"/>
    <lineage>
        <taxon>Bacteria</taxon>
        <taxon>Pseudomonadati</taxon>
        <taxon>Pseudomonadota</taxon>
        <taxon>Gammaproteobacteria</taxon>
        <taxon>Lysobacterales</taxon>
        <taxon>Lysobacteraceae</taxon>
        <taxon>Xylella</taxon>
    </lineage>
</organism>
<reference key="1">
    <citation type="journal article" date="2010" name="J. Bacteriol.">
        <title>Whole genome sequences of two Xylella fastidiosa strains (M12 and M23) causing almond leaf scorch disease in California.</title>
        <authorList>
            <person name="Chen J."/>
            <person name="Xie G."/>
            <person name="Han S."/>
            <person name="Chertkov O."/>
            <person name="Sims D."/>
            <person name="Civerolo E.L."/>
        </authorList>
    </citation>
    <scope>NUCLEOTIDE SEQUENCE [LARGE SCALE GENOMIC DNA]</scope>
    <source>
        <strain>M12</strain>
    </source>
</reference>